<keyword id="KW-0472">Membrane</keyword>
<keyword id="KW-1185">Reference proteome</keyword>
<keyword id="KW-0812">Transmembrane</keyword>
<keyword id="KW-1133">Transmembrane helix</keyword>
<protein>
    <recommendedName>
        <fullName>Uncharacterized protein aq_1982</fullName>
    </recommendedName>
</protein>
<feature type="chain" id="PRO_0000186962" description="Uncharacterized protein aq_1982">
    <location>
        <begin position="1"/>
        <end position="214"/>
    </location>
</feature>
<feature type="transmembrane region" description="Helical" evidence="1">
    <location>
        <begin position="9"/>
        <end position="31"/>
    </location>
</feature>
<feature type="region of interest" description="Disordered" evidence="2">
    <location>
        <begin position="53"/>
        <end position="74"/>
    </location>
</feature>
<feature type="compositionally biased region" description="Basic residues" evidence="2">
    <location>
        <begin position="54"/>
        <end position="67"/>
    </location>
</feature>
<comment type="subcellular location">
    <subcellularLocation>
        <location evidence="3">Membrane</location>
        <topology evidence="3">Single-pass membrane protein</topology>
    </subcellularLocation>
</comment>
<proteinExistence type="predicted"/>
<organism>
    <name type="scientific">Aquifex aeolicus (strain VF5)</name>
    <dbReference type="NCBI Taxonomy" id="224324"/>
    <lineage>
        <taxon>Bacteria</taxon>
        <taxon>Pseudomonadati</taxon>
        <taxon>Aquificota</taxon>
        <taxon>Aquificia</taxon>
        <taxon>Aquificales</taxon>
        <taxon>Aquificaceae</taxon>
        <taxon>Aquifex</taxon>
    </lineage>
</organism>
<evidence type="ECO:0000255" key="1"/>
<evidence type="ECO:0000256" key="2">
    <source>
        <dbReference type="SAM" id="MobiDB-lite"/>
    </source>
</evidence>
<evidence type="ECO:0000305" key="3"/>
<sequence>MVKVSAENFLYFAISVLVNLLFLKILYIYLFLPNISPPQAFTPLSVKIEEIKAPPKKPGKPQKKVVKKKPEAVSVSQAPEKGDVPVEVKEEKEVSLLPELEKKIKERLKKRKEVKQIGEISAVVSKQKVEIRLGSRKLVHVPPPPVFHVKEYPSLVRIKIWVNPEGRVIRAIIIQRSGVTEVDEGLLRFTKKLKFEPIEVPEVQEGVITFTFST</sequence>
<accession>O67790</accession>
<reference key="1">
    <citation type="journal article" date="1998" name="Nature">
        <title>The complete genome of the hyperthermophilic bacterium Aquifex aeolicus.</title>
        <authorList>
            <person name="Deckert G."/>
            <person name="Warren P.V."/>
            <person name="Gaasterland T."/>
            <person name="Young W.G."/>
            <person name="Lenox A.L."/>
            <person name="Graham D.E."/>
            <person name="Overbeek R."/>
            <person name="Snead M.A."/>
            <person name="Keller M."/>
            <person name="Aujay M."/>
            <person name="Huber R."/>
            <person name="Feldman R.A."/>
            <person name="Short J.M."/>
            <person name="Olsen G.J."/>
            <person name="Swanson R.V."/>
        </authorList>
    </citation>
    <scope>NUCLEOTIDE SEQUENCE [LARGE SCALE GENOMIC DNA]</scope>
    <source>
        <strain>VF5</strain>
    </source>
</reference>
<gene>
    <name type="ordered locus">aq_1982</name>
</gene>
<name>Y1982_AQUAE</name>
<dbReference type="EMBL" id="AE000657">
    <property type="protein sequence ID" value="AAC07757.1"/>
    <property type="molecule type" value="Genomic_DNA"/>
</dbReference>
<dbReference type="PIR" id="B70470">
    <property type="entry name" value="B70470"/>
</dbReference>
<dbReference type="RefSeq" id="NP_214359.1">
    <property type="nucleotide sequence ID" value="NC_000918.1"/>
</dbReference>
<dbReference type="RefSeq" id="WP_010881295.1">
    <property type="nucleotide sequence ID" value="NC_000918.1"/>
</dbReference>
<dbReference type="SMR" id="O67790"/>
<dbReference type="STRING" id="224324.aq_1982"/>
<dbReference type="EnsemblBacteria" id="AAC07757">
    <property type="protein sequence ID" value="AAC07757"/>
    <property type="gene ID" value="aq_1982"/>
</dbReference>
<dbReference type="KEGG" id="aae:aq_1982"/>
<dbReference type="eggNOG" id="COG0810">
    <property type="taxonomic scope" value="Bacteria"/>
</dbReference>
<dbReference type="HOGENOM" id="CLU_1189463_0_0_0"/>
<dbReference type="InParanoid" id="O67790"/>
<dbReference type="OrthoDB" id="14974at2"/>
<dbReference type="Proteomes" id="UP000000798">
    <property type="component" value="Chromosome"/>
</dbReference>
<dbReference type="GO" id="GO:0016020">
    <property type="term" value="C:membrane"/>
    <property type="evidence" value="ECO:0007669"/>
    <property type="project" value="UniProtKB-SubCell"/>
</dbReference>
<dbReference type="InterPro" id="IPR006260">
    <property type="entry name" value="TonB/TolA_C"/>
</dbReference>
<dbReference type="NCBIfam" id="TIGR01352">
    <property type="entry name" value="tonB_Cterm"/>
    <property type="match status" value="1"/>
</dbReference>
<dbReference type="SUPFAM" id="SSF74653">
    <property type="entry name" value="TolA/TonB C-terminal domain"/>
    <property type="match status" value="1"/>
</dbReference>